<keyword id="KW-0004">4Fe-4S</keyword>
<keyword id="KW-0963">Cytoplasm</keyword>
<keyword id="KW-0408">Iron</keyword>
<keyword id="KW-0411">Iron-sulfur</keyword>
<keyword id="KW-0479">Metal-binding</keyword>
<keyword id="KW-0949">S-adenosyl-L-methionine</keyword>
<keyword id="KW-0808">Transferase</keyword>
<keyword id="KW-0819">tRNA processing</keyword>
<comment type="function">
    <text evidence="1">Catalyzes the methylthiolation of N6-(dimethylallyl)adenosine (i(6)A), leading to the formation of 2-methylthio-N6-(dimethylallyl)adenosine (ms(2)i(6)A) at position 37 in tRNAs that read codons beginning with uridine.</text>
</comment>
<comment type="catalytic activity">
    <reaction evidence="1">
        <text>N(6)-dimethylallyladenosine(37) in tRNA + (sulfur carrier)-SH + AH2 + 2 S-adenosyl-L-methionine = 2-methylsulfanyl-N(6)-dimethylallyladenosine(37) in tRNA + (sulfur carrier)-H + 5'-deoxyadenosine + L-methionine + A + S-adenosyl-L-homocysteine + 2 H(+)</text>
        <dbReference type="Rhea" id="RHEA:37067"/>
        <dbReference type="Rhea" id="RHEA-COMP:10375"/>
        <dbReference type="Rhea" id="RHEA-COMP:10376"/>
        <dbReference type="Rhea" id="RHEA-COMP:14737"/>
        <dbReference type="Rhea" id="RHEA-COMP:14739"/>
        <dbReference type="ChEBI" id="CHEBI:13193"/>
        <dbReference type="ChEBI" id="CHEBI:15378"/>
        <dbReference type="ChEBI" id="CHEBI:17319"/>
        <dbReference type="ChEBI" id="CHEBI:17499"/>
        <dbReference type="ChEBI" id="CHEBI:29917"/>
        <dbReference type="ChEBI" id="CHEBI:57844"/>
        <dbReference type="ChEBI" id="CHEBI:57856"/>
        <dbReference type="ChEBI" id="CHEBI:59789"/>
        <dbReference type="ChEBI" id="CHEBI:64428"/>
        <dbReference type="ChEBI" id="CHEBI:74415"/>
        <dbReference type="ChEBI" id="CHEBI:74417"/>
        <dbReference type="EC" id="2.8.4.3"/>
    </reaction>
</comment>
<comment type="cofactor">
    <cofactor evidence="1">
        <name>[4Fe-4S] cluster</name>
        <dbReference type="ChEBI" id="CHEBI:49883"/>
    </cofactor>
    <text evidence="1">Binds 2 [4Fe-4S] clusters. One cluster is coordinated with 3 cysteines and an exchangeable S-adenosyl-L-methionine.</text>
</comment>
<comment type="subunit">
    <text evidence="1">Monomer.</text>
</comment>
<comment type="subcellular location">
    <subcellularLocation>
        <location evidence="1">Cytoplasm</location>
    </subcellularLocation>
</comment>
<comment type="similarity">
    <text evidence="1">Belongs to the methylthiotransferase family. MiaB subfamily.</text>
</comment>
<organism>
    <name type="scientific">Yersinia pseudotuberculosis serotype O:1b (strain IP 31758)</name>
    <dbReference type="NCBI Taxonomy" id="349747"/>
    <lineage>
        <taxon>Bacteria</taxon>
        <taxon>Pseudomonadati</taxon>
        <taxon>Pseudomonadota</taxon>
        <taxon>Gammaproteobacteria</taxon>
        <taxon>Enterobacterales</taxon>
        <taxon>Yersiniaceae</taxon>
        <taxon>Yersinia</taxon>
    </lineage>
</organism>
<reference key="1">
    <citation type="journal article" date="2007" name="PLoS Genet.">
        <title>The complete genome sequence of Yersinia pseudotuberculosis IP31758, the causative agent of Far East scarlet-like fever.</title>
        <authorList>
            <person name="Eppinger M."/>
            <person name="Rosovitz M.J."/>
            <person name="Fricke W.F."/>
            <person name="Rasko D.A."/>
            <person name="Kokorina G."/>
            <person name="Fayolle C."/>
            <person name="Lindler L.E."/>
            <person name="Carniel E."/>
            <person name="Ravel J."/>
        </authorList>
    </citation>
    <scope>NUCLEOTIDE SEQUENCE [LARGE SCALE GENOMIC DNA]</scope>
    <source>
        <strain>IP 31758</strain>
    </source>
</reference>
<protein>
    <recommendedName>
        <fullName evidence="1">tRNA-2-methylthio-N(6)-dimethylallyladenosine synthase</fullName>
        <ecNumber evidence="1">2.8.4.3</ecNumber>
    </recommendedName>
    <alternativeName>
        <fullName evidence="1">(Dimethylallyl)adenosine tRNA methylthiotransferase MiaB</fullName>
    </alternativeName>
    <alternativeName>
        <fullName evidence="1">tRNA-i(6)A37 methylthiotransferase</fullName>
    </alternativeName>
</protein>
<dbReference type="EC" id="2.8.4.3" evidence="1"/>
<dbReference type="EMBL" id="CP000720">
    <property type="protein sequence ID" value="ABS49146.1"/>
    <property type="molecule type" value="Genomic_DNA"/>
</dbReference>
<dbReference type="RefSeq" id="WP_011191936.1">
    <property type="nucleotide sequence ID" value="NC_009708.1"/>
</dbReference>
<dbReference type="SMR" id="A7FKU9"/>
<dbReference type="KEGG" id="ypi:YpsIP31758_2915"/>
<dbReference type="HOGENOM" id="CLU_018697_2_0_6"/>
<dbReference type="Proteomes" id="UP000002412">
    <property type="component" value="Chromosome"/>
</dbReference>
<dbReference type="GO" id="GO:0005829">
    <property type="term" value="C:cytosol"/>
    <property type="evidence" value="ECO:0007669"/>
    <property type="project" value="TreeGrafter"/>
</dbReference>
<dbReference type="GO" id="GO:0051539">
    <property type="term" value="F:4 iron, 4 sulfur cluster binding"/>
    <property type="evidence" value="ECO:0007669"/>
    <property type="project" value="UniProtKB-UniRule"/>
</dbReference>
<dbReference type="GO" id="GO:0046872">
    <property type="term" value="F:metal ion binding"/>
    <property type="evidence" value="ECO:0007669"/>
    <property type="project" value="UniProtKB-KW"/>
</dbReference>
<dbReference type="GO" id="GO:0035597">
    <property type="term" value="F:N6-isopentenyladenosine methylthiotransferase activity"/>
    <property type="evidence" value="ECO:0007669"/>
    <property type="project" value="TreeGrafter"/>
</dbReference>
<dbReference type="CDD" id="cd01335">
    <property type="entry name" value="Radical_SAM"/>
    <property type="match status" value="1"/>
</dbReference>
<dbReference type="FunFam" id="3.40.50.12160:FF:000001">
    <property type="entry name" value="tRNA-2-methylthio-N(6)-dimethylallyladenosine synthase"/>
    <property type="match status" value="1"/>
</dbReference>
<dbReference type="FunFam" id="3.80.30.20:FF:000001">
    <property type="entry name" value="tRNA-2-methylthio-N(6)-dimethylallyladenosine synthase 2"/>
    <property type="match status" value="1"/>
</dbReference>
<dbReference type="Gene3D" id="3.40.50.12160">
    <property type="entry name" value="Methylthiotransferase, N-terminal domain"/>
    <property type="match status" value="1"/>
</dbReference>
<dbReference type="Gene3D" id="3.80.30.20">
    <property type="entry name" value="tm_1862 like domain"/>
    <property type="match status" value="1"/>
</dbReference>
<dbReference type="HAMAP" id="MF_01864">
    <property type="entry name" value="tRNA_metthiotr_MiaB"/>
    <property type="match status" value="1"/>
</dbReference>
<dbReference type="InterPro" id="IPR006638">
    <property type="entry name" value="Elp3/MiaA/NifB-like_rSAM"/>
</dbReference>
<dbReference type="InterPro" id="IPR005839">
    <property type="entry name" value="Methylthiotransferase"/>
</dbReference>
<dbReference type="InterPro" id="IPR020612">
    <property type="entry name" value="Methylthiotransferase_CS"/>
</dbReference>
<dbReference type="InterPro" id="IPR013848">
    <property type="entry name" value="Methylthiotransferase_N"/>
</dbReference>
<dbReference type="InterPro" id="IPR038135">
    <property type="entry name" value="Methylthiotransferase_N_sf"/>
</dbReference>
<dbReference type="InterPro" id="IPR006463">
    <property type="entry name" value="MiaB_methiolase"/>
</dbReference>
<dbReference type="InterPro" id="IPR007197">
    <property type="entry name" value="rSAM"/>
</dbReference>
<dbReference type="InterPro" id="IPR023404">
    <property type="entry name" value="rSAM_horseshoe"/>
</dbReference>
<dbReference type="InterPro" id="IPR002792">
    <property type="entry name" value="TRAM_dom"/>
</dbReference>
<dbReference type="NCBIfam" id="TIGR01574">
    <property type="entry name" value="miaB-methiolase"/>
    <property type="match status" value="1"/>
</dbReference>
<dbReference type="NCBIfam" id="TIGR00089">
    <property type="entry name" value="MiaB/RimO family radical SAM methylthiotransferase"/>
    <property type="match status" value="1"/>
</dbReference>
<dbReference type="PANTHER" id="PTHR43020">
    <property type="entry name" value="CDK5 REGULATORY SUBUNIT-ASSOCIATED PROTEIN 1"/>
    <property type="match status" value="1"/>
</dbReference>
<dbReference type="PANTHER" id="PTHR43020:SF2">
    <property type="entry name" value="MITOCHONDRIAL TRNA METHYLTHIOTRANSFERASE CDK5RAP1"/>
    <property type="match status" value="1"/>
</dbReference>
<dbReference type="Pfam" id="PF04055">
    <property type="entry name" value="Radical_SAM"/>
    <property type="match status" value="1"/>
</dbReference>
<dbReference type="Pfam" id="PF01938">
    <property type="entry name" value="TRAM"/>
    <property type="match status" value="1"/>
</dbReference>
<dbReference type="Pfam" id="PF00919">
    <property type="entry name" value="UPF0004"/>
    <property type="match status" value="1"/>
</dbReference>
<dbReference type="SFLD" id="SFLDF00273">
    <property type="entry name" value="(dimethylallyl)adenosine_tRNA"/>
    <property type="match status" value="1"/>
</dbReference>
<dbReference type="SFLD" id="SFLDG01082">
    <property type="entry name" value="B12-binding_domain_containing"/>
    <property type="match status" value="1"/>
</dbReference>
<dbReference type="SFLD" id="SFLDG01061">
    <property type="entry name" value="methylthiotransferase"/>
    <property type="match status" value="1"/>
</dbReference>
<dbReference type="SMART" id="SM00729">
    <property type="entry name" value="Elp3"/>
    <property type="match status" value="1"/>
</dbReference>
<dbReference type="SUPFAM" id="SSF102114">
    <property type="entry name" value="Radical SAM enzymes"/>
    <property type="match status" value="1"/>
</dbReference>
<dbReference type="PROSITE" id="PS51449">
    <property type="entry name" value="MTTASE_N"/>
    <property type="match status" value="1"/>
</dbReference>
<dbReference type="PROSITE" id="PS01278">
    <property type="entry name" value="MTTASE_RADICAL"/>
    <property type="match status" value="1"/>
</dbReference>
<dbReference type="PROSITE" id="PS51918">
    <property type="entry name" value="RADICAL_SAM"/>
    <property type="match status" value="1"/>
</dbReference>
<dbReference type="PROSITE" id="PS50926">
    <property type="entry name" value="TRAM"/>
    <property type="match status" value="1"/>
</dbReference>
<feature type="chain" id="PRO_0000374662" description="tRNA-2-methylthio-N(6)-dimethylallyladenosine synthase">
    <location>
        <begin position="1"/>
        <end position="474"/>
    </location>
</feature>
<feature type="domain" description="MTTase N-terminal" evidence="1">
    <location>
        <begin position="3"/>
        <end position="120"/>
    </location>
</feature>
<feature type="domain" description="Radical SAM core" evidence="2">
    <location>
        <begin position="143"/>
        <end position="375"/>
    </location>
</feature>
<feature type="domain" description="TRAM" evidence="1">
    <location>
        <begin position="378"/>
        <end position="441"/>
    </location>
</feature>
<feature type="binding site" evidence="1">
    <location>
        <position position="12"/>
    </location>
    <ligand>
        <name>[4Fe-4S] cluster</name>
        <dbReference type="ChEBI" id="CHEBI:49883"/>
        <label>1</label>
    </ligand>
</feature>
<feature type="binding site" evidence="1">
    <location>
        <position position="49"/>
    </location>
    <ligand>
        <name>[4Fe-4S] cluster</name>
        <dbReference type="ChEBI" id="CHEBI:49883"/>
        <label>1</label>
    </ligand>
</feature>
<feature type="binding site" evidence="1">
    <location>
        <position position="83"/>
    </location>
    <ligand>
        <name>[4Fe-4S] cluster</name>
        <dbReference type="ChEBI" id="CHEBI:49883"/>
        <label>1</label>
    </ligand>
</feature>
<feature type="binding site" evidence="1">
    <location>
        <position position="157"/>
    </location>
    <ligand>
        <name>[4Fe-4S] cluster</name>
        <dbReference type="ChEBI" id="CHEBI:49883"/>
        <label>2</label>
        <note>4Fe-4S-S-AdoMet</note>
    </ligand>
</feature>
<feature type="binding site" evidence="1">
    <location>
        <position position="161"/>
    </location>
    <ligand>
        <name>[4Fe-4S] cluster</name>
        <dbReference type="ChEBI" id="CHEBI:49883"/>
        <label>2</label>
        <note>4Fe-4S-S-AdoMet</note>
    </ligand>
</feature>
<feature type="binding site" evidence="1">
    <location>
        <position position="164"/>
    </location>
    <ligand>
        <name>[4Fe-4S] cluster</name>
        <dbReference type="ChEBI" id="CHEBI:49883"/>
        <label>2</label>
        <note>4Fe-4S-S-AdoMet</note>
    </ligand>
</feature>
<sequence>MTKKLHIKTWGCQMNEYDSSKMADLLASTHGYQLTTIPEEADLLLLNTCSIREKAQEKVFSLLGQWKLLKEKNPQLIIGVGGCVASQEGEQLRQRAPCVDVIFGPQTLHRLPEMINHVQGTNSPVVDISFPEIEKFDRLPEPRAEGPTAFVSIMEGCNKYCTFCVVPYTRGEEVSRPSDDILFEIAQLAAQGVREVNLLGQNVNAYRGATYDGDICSFAELLRLVAAIDGIDRIRFTTSHPIEFTDDIIDVYRDTPELVSFLHLPVQSGSDRILTMMKRAHTALEYKAIIRKLRQARPDIQISSDFIVGFPGETQQDFEQTMKLVADIHFDTSYSFIYSPRPGTPAADLPDNVSEEEKKQRLHILQQRISQQAMEISRKMVGTVQRVLVEGTSRKNVMELAGRTENNRVVNFEGSPDMIGKFVDVEIVNVYASSLRGILLRTEDQMDLRTHESPQSVIARTRKENEIGVGIYQP</sequence>
<proteinExistence type="inferred from homology"/>
<accession>A7FKU9</accession>
<name>MIAB_YERP3</name>
<evidence type="ECO:0000255" key="1">
    <source>
        <dbReference type="HAMAP-Rule" id="MF_01864"/>
    </source>
</evidence>
<evidence type="ECO:0000255" key="2">
    <source>
        <dbReference type="PROSITE-ProRule" id="PRU01266"/>
    </source>
</evidence>
<gene>
    <name evidence="1" type="primary">miaB</name>
    <name type="ordered locus">YpsIP31758_2915</name>
</gene>